<name>CNPD3_RUTMC</name>
<keyword id="KW-0378">Hydrolase</keyword>
<keyword id="KW-0408">Iron</keyword>
<keyword id="KW-0479">Metal-binding</keyword>
<keyword id="KW-0547">Nucleotide-binding</keyword>
<comment type="cofactor">
    <cofactor evidence="2">
        <name>Fe(2+)</name>
        <dbReference type="ChEBI" id="CHEBI:29033"/>
    </cofactor>
    <text evidence="2">Binds 2 Fe(2+) ions per subunit.</text>
</comment>
<comment type="similarity">
    <text evidence="3">Belongs to the cyclic nucleotide phosphodiesterase class-III family.</text>
</comment>
<reference key="1">
    <citation type="journal article" date="2007" name="Science">
        <title>The Calyptogena magnifica chemoautotrophic symbiont genome.</title>
        <authorList>
            <person name="Newton I.L.G."/>
            <person name="Woyke T."/>
            <person name="Auchtung T.A."/>
            <person name="Dilly G.F."/>
            <person name="Dutton R.J."/>
            <person name="Fisher M.C."/>
            <person name="Fontanez K.M."/>
            <person name="Lau E."/>
            <person name="Stewart F.J."/>
            <person name="Richardson P.M."/>
            <person name="Barry K.W."/>
            <person name="Saunders E."/>
            <person name="Detter J.C."/>
            <person name="Wu D."/>
            <person name="Eisen J.A."/>
            <person name="Cavanaugh C.M."/>
        </authorList>
    </citation>
    <scope>NUCLEOTIDE SEQUENCE [LARGE SCALE GENOMIC DNA]</scope>
</reference>
<organism>
    <name type="scientific">Ruthia magnifica subsp. Calyptogena magnifica</name>
    <dbReference type="NCBI Taxonomy" id="413404"/>
    <lineage>
        <taxon>Bacteria</taxon>
        <taxon>Pseudomonadati</taxon>
        <taxon>Pseudomonadota</taxon>
        <taxon>Gammaproteobacteria</taxon>
        <taxon>Candidatus Pseudothioglobaceae</taxon>
        <taxon>Candidatus Ruthturnera</taxon>
    </lineage>
</organism>
<sequence>MMSHSFVQISDCHIDNVEYAMGVNTHVNLKKIINKIINIDTDALLISGDLTHNGTITSYKTLQQILFPVQIKLLVISGNHDIDNNLNTIFSKNLFSQFTLRKWEIISTNSVQTSKTSGFLTKNELKKLNFNLTQSIAKYILIVLHHPIVPMNSTWDDSLSLENPKALFNVLDKYPKIQAILFGHAHQAAEFSRLGVKIISCPSTALQFNNETRIGFNHYTLYDNGQLTIDTQWI</sequence>
<evidence type="ECO:0000250" key="1">
    <source>
        <dbReference type="UniProtKB" id="P9WP65"/>
    </source>
</evidence>
<evidence type="ECO:0000250" key="2">
    <source>
        <dbReference type="UniProtKB" id="Q6XBH1"/>
    </source>
</evidence>
<evidence type="ECO:0000305" key="3"/>
<proteinExistence type="inferred from homology"/>
<feature type="chain" id="PRO_0000413378" description="Probable cyclic nucleotide phosphodiesterase Rmag_0669">
    <location>
        <begin position="1"/>
        <end position="234"/>
    </location>
</feature>
<feature type="binding site" evidence="2">
    <location>
        <position position="11"/>
    </location>
    <ligand>
        <name>Fe cation</name>
        <dbReference type="ChEBI" id="CHEBI:24875"/>
        <label>1</label>
    </ligand>
</feature>
<feature type="binding site" evidence="1">
    <location>
        <position position="13"/>
    </location>
    <ligand>
        <name>AMP</name>
        <dbReference type="ChEBI" id="CHEBI:456215"/>
    </ligand>
</feature>
<feature type="binding site" evidence="2">
    <location>
        <position position="13"/>
    </location>
    <ligand>
        <name>Fe cation</name>
        <dbReference type="ChEBI" id="CHEBI:24875"/>
        <label>1</label>
    </ligand>
</feature>
<feature type="binding site" evidence="1">
    <location>
        <position position="49"/>
    </location>
    <ligand>
        <name>AMP</name>
        <dbReference type="ChEBI" id="CHEBI:456215"/>
    </ligand>
</feature>
<feature type="binding site" evidence="2">
    <location>
        <position position="49"/>
    </location>
    <ligand>
        <name>Fe cation</name>
        <dbReference type="ChEBI" id="CHEBI:24875"/>
        <label>1</label>
    </ligand>
</feature>
<feature type="binding site" evidence="2">
    <location>
        <position position="49"/>
    </location>
    <ligand>
        <name>Fe cation</name>
        <dbReference type="ChEBI" id="CHEBI:24875"/>
        <label>2</label>
    </ligand>
</feature>
<feature type="binding site" evidence="1">
    <location>
        <begin position="79"/>
        <end position="80"/>
    </location>
    <ligand>
        <name>AMP</name>
        <dbReference type="ChEBI" id="CHEBI:456215"/>
    </ligand>
</feature>
<feature type="binding site" evidence="2">
    <location>
        <position position="79"/>
    </location>
    <ligand>
        <name>Fe cation</name>
        <dbReference type="ChEBI" id="CHEBI:24875"/>
        <label>2</label>
    </ligand>
</feature>
<feature type="binding site" evidence="2">
    <location>
        <position position="145"/>
    </location>
    <ligand>
        <name>Fe cation</name>
        <dbReference type="ChEBI" id="CHEBI:24875"/>
        <label>2</label>
    </ligand>
</feature>
<feature type="binding site" evidence="2">
    <location>
        <position position="184"/>
    </location>
    <ligand>
        <name>Fe cation</name>
        <dbReference type="ChEBI" id="CHEBI:24875"/>
        <label>2</label>
    </ligand>
</feature>
<feature type="binding site" evidence="1">
    <location>
        <position position="186"/>
    </location>
    <ligand>
        <name>AMP</name>
        <dbReference type="ChEBI" id="CHEBI:456215"/>
    </ligand>
</feature>
<feature type="binding site" evidence="2">
    <location>
        <position position="186"/>
    </location>
    <ligand>
        <name>Fe cation</name>
        <dbReference type="ChEBI" id="CHEBI:24875"/>
        <label>1</label>
    </ligand>
</feature>
<accession>A1AWV4</accession>
<gene>
    <name type="ordered locus">Rmag_0669</name>
</gene>
<protein>
    <recommendedName>
        <fullName evidence="1">Probable cyclic nucleotide phosphodiesterase Rmag_0669</fullName>
        <ecNumber evidence="1">3.1.4.-</ecNumber>
    </recommendedName>
</protein>
<dbReference type="EC" id="3.1.4.-" evidence="1"/>
<dbReference type="EMBL" id="CP000488">
    <property type="protein sequence ID" value="ABL02411.1"/>
    <property type="molecule type" value="Genomic_DNA"/>
</dbReference>
<dbReference type="RefSeq" id="WP_011738036.1">
    <property type="nucleotide sequence ID" value="NC_008610.1"/>
</dbReference>
<dbReference type="SMR" id="A1AWV4"/>
<dbReference type="STRING" id="413404.Rmag_0669"/>
<dbReference type="KEGG" id="rma:Rmag_0669"/>
<dbReference type="eggNOG" id="COG1409">
    <property type="taxonomic scope" value="Bacteria"/>
</dbReference>
<dbReference type="HOGENOM" id="CLU_070320_0_0_6"/>
<dbReference type="OrthoDB" id="9784378at2"/>
<dbReference type="Proteomes" id="UP000002587">
    <property type="component" value="Chromosome"/>
</dbReference>
<dbReference type="GO" id="GO:0004115">
    <property type="term" value="F:3',5'-cyclic-AMP phosphodiesterase activity"/>
    <property type="evidence" value="ECO:0007669"/>
    <property type="project" value="UniProtKB-EC"/>
</dbReference>
<dbReference type="GO" id="GO:0046872">
    <property type="term" value="F:metal ion binding"/>
    <property type="evidence" value="ECO:0007669"/>
    <property type="project" value="UniProtKB-KW"/>
</dbReference>
<dbReference type="GO" id="GO:0000166">
    <property type="term" value="F:nucleotide binding"/>
    <property type="evidence" value="ECO:0007669"/>
    <property type="project" value="UniProtKB-KW"/>
</dbReference>
<dbReference type="Gene3D" id="3.60.21.10">
    <property type="match status" value="1"/>
</dbReference>
<dbReference type="InterPro" id="IPR004843">
    <property type="entry name" value="Calcineurin-like_PHP_ApaH"/>
</dbReference>
<dbReference type="InterPro" id="IPR050884">
    <property type="entry name" value="CNP_phosphodiesterase-III"/>
</dbReference>
<dbReference type="InterPro" id="IPR029052">
    <property type="entry name" value="Metallo-depent_PP-like"/>
</dbReference>
<dbReference type="PANTHER" id="PTHR42988:SF2">
    <property type="entry name" value="CYCLIC NUCLEOTIDE PHOSPHODIESTERASE CBUA0032-RELATED"/>
    <property type="match status" value="1"/>
</dbReference>
<dbReference type="PANTHER" id="PTHR42988">
    <property type="entry name" value="PHOSPHOHYDROLASE"/>
    <property type="match status" value="1"/>
</dbReference>
<dbReference type="Pfam" id="PF00149">
    <property type="entry name" value="Metallophos"/>
    <property type="match status" value="1"/>
</dbReference>
<dbReference type="SUPFAM" id="SSF56300">
    <property type="entry name" value="Metallo-dependent phosphatases"/>
    <property type="match status" value="1"/>
</dbReference>